<keyword id="KW-0687">Ribonucleoprotein</keyword>
<keyword id="KW-0689">Ribosomal protein</keyword>
<keyword id="KW-0694">RNA-binding</keyword>
<keyword id="KW-0699">rRNA-binding</keyword>
<accession>Q0BJ30</accession>
<protein>
    <recommendedName>
        <fullName evidence="1">Large ribosomal subunit protein uL18</fullName>
    </recommendedName>
    <alternativeName>
        <fullName evidence="2">50S ribosomal protein L18</fullName>
    </alternativeName>
</protein>
<sequence>MDKTQSRLRRARQTRIKIAELQVARLAVHRTNTHIYAQVFSPCGTKVLASASTLEAEVRAELADKSGKGGNVNAATLIGKRIAEKAKAAGIESVAFDRSGFRYHGRVKALAEAAREAGLKF</sequence>
<name>RL18_BURCM</name>
<evidence type="ECO:0000255" key="1">
    <source>
        <dbReference type="HAMAP-Rule" id="MF_01337"/>
    </source>
</evidence>
<evidence type="ECO:0000305" key="2"/>
<reference key="1">
    <citation type="submission" date="2006-08" db="EMBL/GenBank/DDBJ databases">
        <title>Complete sequence of chromosome 1 of Burkholderia cepacia AMMD.</title>
        <authorList>
            <person name="Copeland A."/>
            <person name="Lucas S."/>
            <person name="Lapidus A."/>
            <person name="Barry K."/>
            <person name="Detter J.C."/>
            <person name="Glavina del Rio T."/>
            <person name="Hammon N."/>
            <person name="Israni S."/>
            <person name="Pitluck S."/>
            <person name="Bruce D."/>
            <person name="Chain P."/>
            <person name="Malfatti S."/>
            <person name="Shin M."/>
            <person name="Vergez L."/>
            <person name="Schmutz J."/>
            <person name="Larimer F."/>
            <person name="Land M."/>
            <person name="Hauser L."/>
            <person name="Kyrpides N."/>
            <person name="Kim E."/>
            <person name="Parke J."/>
            <person name="Coenye T."/>
            <person name="Konstantinidis K."/>
            <person name="Ramette A."/>
            <person name="Tiedje J."/>
            <person name="Richardson P."/>
        </authorList>
    </citation>
    <scope>NUCLEOTIDE SEQUENCE [LARGE SCALE GENOMIC DNA]</scope>
    <source>
        <strain>ATCC BAA-244 / DSM 16087 / CCUG 44356 / LMG 19182 / AMMD</strain>
    </source>
</reference>
<gene>
    <name evidence="1" type="primary">rplR</name>
    <name type="ordered locus">Bamb_0283</name>
</gene>
<comment type="function">
    <text evidence="1">This is one of the proteins that bind and probably mediate the attachment of the 5S RNA into the large ribosomal subunit, where it forms part of the central protuberance.</text>
</comment>
<comment type="subunit">
    <text evidence="1">Part of the 50S ribosomal subunit; part of the 5S rRNA/L5/L18/L25 subcomplex. Contacts the 5S and 23S rRNAs.</text>
</comment>
<comment type="similarity">
    <text evidence="1">Belongs to the universal ribosomal protein uL18 family.</text>
</comment>
<feature type="chain" id="PRO_1000052996" description="Large ribosomal subunit protein uL18">
    <location>
        <begin position="1"/>
        <end position="121"/>
    </location>
</feature>
<organism>
    <name type="scientific">Burkholderia ambifaria (strain ATCC BAA-244 / DSM 16087 / CCUG 44356 / LMG 19182 / AMMD)</name>
    <name type="common">Burkholderia cepacia (strain AMMD)</name>
    <dbReference type="NCBI Taxonomy" id="339670"/>
    <lineage>
        <taxon>Bacteria</taxon>
        <taxon>Pseudomonadati</taxon>
        <taxon>Pseudomonadota</taxon>
        <taxon>Betaproteobacteria</taxon>
        <taxon>Burkholderiales</taxon>
        <taxon>Burkholderiaceae</taxon>
        <taxon>Burkholderia</taxon>
        <taxon>Burkholderia cepacia complex</taxon>
    </lineage>
</organism>
<dbReference type="EMBL" id="CP000440">
    <property type="protein sequence ID" value="ABI85843.1"/>
    <property type="molecule type" value="Genomic_DNA"/>
</dbReference>
<dbReference type="RefSeq" id="WP_006477183.1">
    <property type="nucleotide sequence ID" value="NZ_CP009798.1"/>
</dbReference>
<dbReference type="SMR" id="Q0BJ30"/>
<dbReference type="GeneID" id="98107144"/>
<dbReference type="KEGG" id="bam:Bamb_0283"/>
<dbReference type="PATRIC" id="fig|339670.21.peg.1337"/>
<dbReference type="eggNOG" id="COG0256">
    <property type="taxonomic scope" value="Bacteria"/>
</dbReference>
<dbReference type="Proteomes" id="UP000000662">
    <property type="component" value="Chromosome 1"/>
</dbReference>
<dbReference type="GO" id="GO:0022625">
    <property type="term" value="C:cytosolic large ribosomal subunit"/>
    <property type="evidence" value="ECO:0007669"/>
    <property type="project" value="TreeGrafter"/>
</dbReference>
<dbReference type="GO" id="GO:0008097">
    <property type="term" value="F:5S rRNA binding"/>
    <property type="evidence" value="ECO:0007669"/>
    <property type="project" value="TreeGrafter"/>
</dbReference>
<dbReference type="GO" id="GO:0003735">
    <property type="term" value="F:structural constituent of ribosome"/>
    <property type="evidence" value="ECO:0007669"/>
    <property type="project" value="InterPro"/>
</dbReference>
<dbReference type="GO" id="GO:0006412">
    <property type="term" value="P:translation"/>
    <property type="evidence" value="ECO:0007669"/>
    <property type="project" value="UniProtKB-UniRule"/>
</dbReference>
<dbReference type="CDD" id="cd00432">
    <property type="entry name" value="Ribosomal_L18_L5e"/>
    <property type="match status" value="1"/>
</dbReference>
<dbReference type="FunFam" id="3.30.420.100:FF:000001">
    <property type="entry name" value="50S ribosomal protein L18"/>
    <property type="match status" value="1"/>
</dbReference>
<dbReference type="Gene3D" id="3.30.420.100">
    <property type="match status" value="1"/>
</dbReference>
<dbReference type="HAMAP" id="MF_01337_B">
    <property type="entry name" value="Ribosomal_uL18_B"/>
    <property type="match status" value="1"/>
</dbReference>
<dbReference type="InterPro" id="IPR004389">
    <property type="entry name" value="Ribosomal_uL18_bac-type"/>
</dbReference>
<dbReference type="InterPro" id="IPR005484">
    <property type="entry name" value="Ribosomal_uL18_bac/euk"/>
</dbReference>
<dbReference type="NCBIfam" id="TIGR00060">
    <property type="entry name" value="L18_bact"/>
    <property type="match status" value="1"/>
</dbReference>
<dbReference type="PANTHER" id="PTHR12899">
    <property type="entry name" value="39S RIBOSOMAL PROTEIN L18, MITOCHONDRIAL"/>
    <property type="match status" value="1"/>
</dbReference>
<dbReference type="PANTHER" id="PTHR12899:SF3">
    <property type="entry name" value="LARGE RIBOSOMAL SUBUNIT PROTEIN UL18M"/>
    <property type="match status" value="1"/>
</dbReference>
<dbReference type="Pfam" id="PF00861">
    <property type="entry name" value="Ribosomal_L18p"/>
    <property type="match status" value="1"/>
</dbReference>
<dbReference type="SUPFAM" id="SSF53137">
    <property type="entry name" value="Translational machinery components"/>
    <property type="match status" value="1"/>
</dbReference>
<proteinExistence type="inferred from homology"/>